<reference key="1">
    <citation type="journal article" date="2009" name="J. Bacteriol.">
        <title>Complete genome sequence and comparative genome analysis of enteropathogenic Escherichia coli O127:H6 strain E2348/69.</title>
        <authorList>
            <person name="Iguchi A."/>
            <person name="Thomson N.R."/>
            <person name="Ogura Y."/>
            <person name="Saunders D."/>
            <person name="Ooka T."/>
            <person name="Henderson I.R."/>
            <person name="Harris D."/>
            <person name="Asadulghani M."/>
            <person name="Kurokawa K."/>
            <person name="Dean P."/>
            <person name="Kenny B."/>
            <person name="Quail M.A."/>
            <person name="Thurston S."/>
            <person name="Dougan G."/>
            <person name="Hayashi T."/>
            <person name="Parkhill J."/>
            <person name="Frankel G."/>
        </authorList>
    </citation>
    <scope>NUCLEOTIDE SEQUENCE [LARGE SCALE GENOMIC DNA]</scope>
    <source>
        <strain>E2348/69 / EPEC</strain>
    </source>
</reference>
<sequence>MNPLPEQYANTALPTLPGQPQNPCAWPRDELTVGGIKAHIDTFQRWLGDAFDNGISAEQLIEARTEFIDQLLQRLWIEAGFSQIADLALVAVGGYGRGELHPLSDIDLLILSRKKLPDDQAQKVGELLTLLWDVKLEVGHSVRTLEECMLEGLSDLTVATNLIESRLLIGDVALFLELQKHIFSEGFWPSDKFYAAKVEEQNQRHQRYHGTSYNLEPDIKSSPGGLRDIHTLQWVARRHFGATSLDEMVGFGFLTSAERAELNECLHILWRIRFALHLVVSRYDNRLLFDRQLSVAQRLNYSGEGNEPVERMMKDYFRVTRRVSELNQMLLQLFDEAILALPADEKPRPIDDEFQLRGTLIDLRDETLFMRQPEAILRMFYTMVRNSAITGIYSTTLRQLRHARRHLQQPLCNIPEARKLFLSILRHPGAVRRGLLPMHRHSVLGAYMPQWSHIVGQMQFDLFHAYTVDEHTIRVMLKLESFASEETRQRHPLCVDVWPRLPSTELIFIAALFHDIAKGRGGDHSILGAQDVVHFAELHGLNSRETQLVAWLVRQHLLMSVTAQRRDIQDPEVIKQFAEEVQTENRLRYLVCLTVADICATNETLWNSWKQSLLRELYFATEKQLRRGMQNTPDMRERVRHHQLQALALLRMDNIDEEALHQIWSRCRANYFVRHSPNQLAWHARHLLQHDLSKPLVLLSPQATRGGTEIFIWSPDRPYLFAAVCAELDRRNLSVHDAQIFTTRDGMAMDTFIVLEPDGSPLSADRHEVIRFGLEQVLIQSSWQPPQPRRQPAKLRHFTVETEVTFLPTHTDRKSFLELIALDQPGLLARVGKIFADLGISLHGARITTIGERVEDLFIIATADRRALNNELQQEVHQRLTEALNPNDKG</sequence>
<dbReference type="EC" id="2.7.7.59" evidence="1"/>
<dbReference type="EC" id="3.1.4.-" evidence="1"/>
<dbReference type="EMBL" id="FM180568">
    <property type="protein sequence ID" value="CAS07720.1"/>
    <property type="molecule type" value="Genomic_DNA"/>
</dbReference>
<dbReference type="RefSeq" id="WP_001068924.1">
    <property type="nucleotide sequence ID" value="NC_011601.1"/>
</dbReference>
<dbReference type="SMR" id="B7UIL2"/>
<dbReference type="KEGG" id="ecg:E2348C_0172"/>
<dbReference type="HOGENOM" id="CLU_012833_0_0_6"/>
<dbReference type="Proteomes" id="UP000008205">
    <property type="component" value="Chromosome"/>
</dbReference>
<dbReference type="GO" id="GO:0008773">
    <property type="term" value="F:[protein-PII] uridylyltransferase activity"/>
    <property type="evidence" value="ECO:0007669"/>
    <property type="project" value="UniProtKB-UniRule"/>
</dbReference>
<dbReference type="GO" id="GO:0008081">
    <property type="term" value="F:phosphoric diester hydrolase activity"/>
    <property type="evidence" value="ECO:0007669"/>
    <property type="project" value="UniProtKB-UniRule"/>
</dbReference>
<dbReference type="GO" id="GO:0006808">
    <property type="term" value="P:regulation of nitrogen utilization"/>
    <property type="evidence" value="ECO:0007669"/>
    <property type="project" value="UniProtKB-UniRule"/>
</dbReference>
<dbReference type="CDD" id="cd04899">
    <property type="entry name" value="ACT_ACR-UUR-like_2"/>
    <property type="match status" value="1"/>
</dbReference>
<dbReference type="CDD" id="cd04900">
    <property type="entry name" value="ACT_UUR-like_1"/>
    <property type="match status" value="1"/>
</dbReference>
<dbReference type="CDD" id="cd00077">
    <property type="entry name" value="HDc"/>
    <property type="match status" value="1"/>
</dbReference>
<dbReference type="CDD" id="cd05401">
    <property type="entry name" value="NT_GlnE_GlnD_like"/>
    <property type="match status" value="1"/>
</dbReference>
<dbReference type="FunFam" id="1.10.3210.10:FF:000005">
    <property type="entry name" value="Bifunctional uridylyltransferase/uridylyl-removing enzyme"/>
    <property type="match status" value="1"/>
</dbReference>
<dbReference type="Gene3D" id="1.10.3210.10">
    <property type="entry name" value="Hypothetical protein af1432"/>
    <property type="match status" value="1"/>
</dbReference>
<dbReference type="HAMAP" id="MF_00277">
    <property type="entry name" value="PII_uridylyl_transf"/>
    <property type="match status" value="1"/>
</dbReference>
<dbReference type="InterPro" id="IPR045865">
    <property type="entry name" value="ACT-like_dom_sf"/>
</dbReference>
<dbReference type="InterPro" id="IPR002912">
    <property type="entry name" value="ACT_dom"/>
</dbReference>
<dbReference type="InterPro" id="IPR003607">
    <property type="entry name" value="HD/PDEase_dom"/>
</dbReference>
<dbReference type="InterPro" id="IPR006674">
    <property type="entry name" value="HD_domain"/>
</dbReference>
<dbReference type="InterPro" id="IPR043519">
    <property type="entry name" value="NT_sf"/>
</dbReference>
<dbReference type="InterPro" id="IPR013546">
    <property type="entry name" value="PII_UdlTrfase/GS_AdlTrfase"/>
</dbReference>
<dbReference type="InterPro" id="IPR002934">
    <property type="entry name" value="Polymerase_NTP_transf_dom"/>
</dbReference>
<dbReference type="InterPro" id="IPR010043">
    <property type="entry name" value="UTase/UR"/>
</dbReference>
<dbReference type="NCBIfam" id="NF002487">
    <property type="entry name" value="PRK01759.1"/>
    <property type="match status" value="1"/>
</dbReference>
<dbReference type="NCBIfam" id="NF003448">
    <property type="entry name" value="PRK05007.1"/>
    <property type="match status" value="1"/>
</dbReference>
<dbReference type="NCBIfam" id="TIGR01693">
    <property type="entry name" value="UTase_glnD"/>
    <property type="match status" value="1"/>
</dbReference>
<dbReference type="PANTHER" id="PTHR47320">
    <property type="entry name" value="BIFUNCTIONAL URIDYLYLTRANSFERASE/URIDYLYL-REMOVING ENZYME"/>
    <property type="match status" value="1"/>
</dbReference>
<dbReference type="PANTHER" id="PTHR47320:SF1">
    <property type="entry name" value="BIFUNCTIONAL URIDYLYLTRANSFERASE_URIDYLYL-REMOVING ENZYME"/>
    <property type="match status" value="1"/>
</dbReference>
<dbReference type="Pfam" id="PF01842">
    <property type="entry name" value="ACT"/>
    <property type="match status" value="2"/>
</dbReference>
<dbReference type="Pfam" id="PF08335">
    <property type="entry name" value="GlnD_UR_UTase"/>
    <property type="match status" value="1"/>
</dbReference>
<dbReference type="Pfam" id="PF01966">
    <property type="entry name" value="HD"/>
    <property type="match status" value="1"/>
</dbReference>
<dbReference type="Pfam" id="PF01909">
    <property type="entry name" value="NTP_transf_2"/>
    <property type="match status" value="1"/>
</dbReference>
<dbReference type="PIRSF" id="PIRSF006288">
    <property type="entry name" value="PII_uridyltransf"/>
    <property type="match status" value="1"/>
</dbReference>
<dbReference type="SMART" id="SM00471">
    <property type="entry name" value="HDc"/>
    <property type="match status" value="1"/>
</dbReference>
<dbReference type="SUPFAM" id="SSF55021">
    <property type="entry name" value="ACT-like"/>
    <property type="match status" value="2"/>
</dbReference>
<dbReference type="SUPFAM" id="SSF109604">
    <property type="entry name" value="HD-domain/PDEase-like"/>
    <property type="match status" value="1"/>
</dbReference>
<dbReference type="SUPFAM" id="SSF81301">
    <property type="entry name" value="Nucleotidyltransferase"/>
    <property type="match status" value="1"/>
</dbReference>
<dbReference type="SUPFAM" id="SSF81593">
    <property type="entry name" value="Nucleotidyltransferase substrate binding subunit/domain"/>
    <property type="match status" value="1"/>
</dbReference>
<dbReference type="PROSITE" id="PS51671">
    <property type="entry name" value="ACT"/>
    <property type="match status" value="2"/>
</dbReference>
<dbReference type="PROSITE" id="PS51831">
    <property type="entry name" value="HD"/>
    <property type="match status" value="1"/>
</dbReference>
<organism>
    <name type="scientific">Escherichia coli O127:H6 (strain E2348/69 / EPEC)</name>
    <dbReference type="NCBI Taxonomy" id="574521"/>
    <lineage>
        <taxon>Bacteria</taxon>
        <taxon>Pseudomonadati</taxon>
        <taxon>Pseudomonadota</taxon>
        <taxon>Gammaproteobacteria</taxon>
        <taxon>Enterobacterales</taxon>
        <taxon>Enterobacteriaceae</taxon>
        <taxon>Escherichia</taxon>
    </lineage>
</organism>
<gene>
    <name evidence="1" type="primary">glnD</name>
    <name type="ordered locus">E2348C_0172</name>
</gene>
<proteinExistence type="inferred from homology"/>
<keyword id="KW-0378">Hydrolase</keyword>
<keyword id="KW-0460">Magnesium</keyword>
<keyword id="KW-0511">Multifunctional enzyme</keyword>
<keyword id="KW-0548">Nucleotidyltransferase</keyword>
<keyword id="KW-1185">Reference proteome</keyword>
<keyword id="KW-0677">Repeat</keyword>
<keyword id="KW-0808">Transferase</keyword>
<feature type="chain" id="PRO_1000132528" description="Bifunctional uridylyltransferase/uridylyl-removing enzyme">
    <location>
        <begin position="1"/>
        <end position="890"/>
    </location>
</feature>
<feature type="domain" description="HD" evidence="2">
    <location>
        <begin position="468"/>
        <end position="590"/>
    </location>
</feature>
<feature type="domain" description="ACT 1" evidence="1">
    <location>
        <begin position="709"/>
        <end position="789"/>
    </location>
</feature>
<feature type="domain" description="ACT 2" evidence="1">
    <location>
        <begin position="816"/>
        <end position="890"/>
    </location>
</feature>
<feature type="region of interest" description="Uridylyltransferase">
    <location>
        <begin position="1"/>
        <end position="349"/>
    </location>
</feature>
<feature type="region of interest" description="Uridylyl-removing">
    <location>
        <begin position="350"/>
        <end position="708"/>
    </location>
</feature>
<name>GLND_ECO27</name>
<protein>
    <recommendedName>
        <fullName evidence="1">Bifunctional uridylyltransferase/uridylyl-removing enzyme</fullName>
        <shortName evidence="1">UTase/UR</shortName>
    </recommendedName>
    <alternativeName>
        <fullName evidence="1">Bifunctional [protein-PII] modification enzyme</fullName>
    </alternativeName>
    <alternativeName>
        <fullName evidence="1">Bifunctional nitrogen sensor protein</fullName>
    </alternativeName>
    <domain>
        <recommendedName>
            <fullName evidence="1">[Protein-PII] uridylyltransferase</fullName>
            <shortName evidence="1">PII uridylyltransferase</shortName>
            <shortName evidence="1">UTase</shortName>
            <ecNumber evidence="1">2.7.7.59</ecNumber>
        </recommendedName>
    </domain>
    <domain>
        <recommendedName>
            <fullName evidence="1">[Protein-PII]-UMP uridylyl-removing enzyme</fullName>
            <shortName evidence="1">UR</shortName>
            <ecNumber evidence="1">3.1.4.-</ecNumber>
        </recommendedName>
    </domain>
</protein>
<evidence type="ECO:0000255" key="1">
    <source>
        <dbReference type="HAMAP-Rule" id="MF_00277"/>
    </source>
</evidence>
<evidence type="ECO:0000255" key="2">
    <source>
        <dbReference type="PROSITE-ProRule" id="PRU01175"/>
    </source>
</evidence>
<comment type="function">
    <text evidence="1">Modifies, by uridylylation and deuridylylation, the PII regulatory proteins (GlnB and homologs), in response to the nitrogen status of the cell that GlnD senses through the glutamine level. Under low glutamine levels, catalyzes the conversion of the PII proteins and UTP to PII-UMP and PPi, while under higher glutamine levels, GlnD hydrolyzes PII-UMP to PII and UMP (deuridylylation). Thus, controls uridylylation state and activity of the PII proteins, and plays an important role in the regulation of nitrogen assimilation and metabolism.</text>
</comment>
<comment type="catalytic activity">
    <reaction evidence="1">
        <text>[protein-PII]-L-tyrosine + UTP = [protein-PII]-uridylyl-L-tyrosine + diphosphate</text>
        <dbReference type="Rhea" id="RHEA:13673"/>
        <dbReference type="Rhea" id="RHEA-COMP:12147"/>
        <dbReference type="Rhea" id="RHEA-COMP:12148"/>
        <dbReference type="ChEBI" id="CHEBI:33019"/>
        <dbReference type="ChEBI" id="CHEBI:46398"/>
        <dbReference type="ChEBI" id="CHEBI:46858"/>
        <dbReference type="ChEBI" id="CHEBI:90602"/>
        <dbReference type="EC" id="2.7.7.59"/>
    </reaction>
</comment>
<comment type="catalytic activity">
    <reaction evidence="1">
        <text>[protein-PII]-uridylyl-L-tyrosine + H2O = [protein-PII]-L-tyrosine + UMP + H(+)</text>
        <dbReference type="Rhea" id="RHEA:48600"/>
        <dbReference type="Rhea" id="RHEA-COMP:12147"/>
        <dbReference type="Rhea" id="RHEA-COMP:12148"/>
        <dbReference type="ChEBI" id="CHEBI:15377"/>
        <dbReference type="ChEBI" id="CHEBI:15378"/>
        <dbReference type="ChEBI" id="CHEBI:46858"/>
        <dbReference type="ChEBI" id="CHEBI:57865"/>
        <dbReference type="ChEBI" id="CHEBI:90602"/>
    </reaction>
</comment>
<comment type="cofactor">
    <cofactor evidence="1">
        <name>Mg(2+)</name>
        <dbReference type="ChEBI" id="CHEBI:18420"/>
    </cofactor>
</comment>
<comment type="activity regulation">
    <text evidence="1">Uridylyltransferase (UTase) activity is inhibited by glutamine, while glutamine activates uridylyl-removing (UR) activity.</text>
</comment>
<comment type="domain">
    <text evidence="1">Has four distinct domains: an N-terminal nucleotidyltransferase (NT) domain responsible for UTase activity, a central HD domain that encodes UR activity, and two C-terminal ACT domains that seem to have a role in glutamine sensing.</text>
</comment>
<comment type="similarity">
    <text evidence="1">Belongs to the GlnD family.</text>
</comment>
<accession>B7UIL2</accession>